<name>OCA1_EREGS</name>
<evidence type="ECO:0000250" key="1"/>
<evidence type="ECO:0000255" key="2">
    <source>
        <dbReference type="PROSITE-ProRule" id="PRU00160"/>
    </source>
</evidence>
<evidence type="ECO:0000256" key="3">
    <source>
        <dbReference type="SAM" id="MobiDB-lite"/>
    </source>
</evidence>
<evidence type="ECO:0000305" key="4"/>
<organism>
    <name type="scientific">Eremothecium gossypii (strain ATCC 10895 / CBS 109.51 / FGSC 9923 / NRRL Y-1056)</name>
    <name type="common">Yeast</name>
    <name type="synonym">Ashbya gossypii</name>
    <dbReference type="NCBI Taxonomy" id="284811"/>
    <lineage>
        <taxon>Eukaryota</taxon>
        <taxon>Fungi</taxon>
        <taxon>Dikarya</taxon>
        <taxon>Ascomycota</taxon>
        <taxon>Saccharomycotina</taxon>
        <taxon>Saccharomycetes</taxon>
        <taxon>Saccharomycetales</taxon>
        <taxon>Saccharomycetaceae</taxon>
        <taxon>Eremothecium</taxon>
    </lineage>
</organism>
<reference key="1">
    <citation type="journal article" date="2004" name="Science">
        <title>The Ashbya gossypii genome as a tool for mapping the ancient Saccharomyces cerevisiae genome.</title>
        <authorList>
            <person name="Dietrich F.S."/>
            <person name="Voegeli S."/>
            <person name="Brachat S."/>
            <person name="Lerch A."/>
            <person name="Gates K."/>
            <person name="Steiner S."/>
            <person name="Mohr C."/>
            <person name="Poehlmann R."/>
            <person name="Luedi P."/>
            <person name="Choi S."/>
            <person name="Wing R.A."/>
            <person name="Flavier A."/>
            <person name="Gaffney T.D."/>
            <person name="Philippsen P."/>
        </authorList>
    </citation>
    <scope>NUCLEOTIDE SEQUENCE [LARGE SCALE GENOMIC DNA]</scope>
    <source>
        <strain>ATCC 10895 / CBS 109.51 / FGSC 9923 / NRRL Y-1056</strain>
    </source>
</reference>
<reference key="2">
    <citation type="journal article" date="2013" name="G3 (Bethesda)">
        <title>Genomes of Ashbya fungi isolated from insects reveal four mating-type loci, numerous translocations, lack of transposons, and distinct gene duplications.</title>
        <authorList>
            <person name="Dietrich F.S."/>
            <person name="Voegeli S."/>
            <person name="Kuo S."/>
            <person name="Philippsen P."/>
        </authorList>
    </citation>
    <scope>GENOME REANNOTATION</scope>
    <source>
        <strain>ATCC 10895 / CBS 109.51 / FGSC 9923 / NRRL Y-1056</strain>
    </source>
</reference>
<comment type="function">
    <text evidence="1">Putative tyrosine-protein phosphatase required for protection against superoxide stress.</text>
</comment>
<comment type="catalytic activity">
    <reaction>
        <text>O-phospho-L-tyrosyl-[protein] + H2O = L-tyrosyl-[protein] + phosphate</text>
        <dbReference type="Rhea" id="RHEA:10684"/>
        <dbReference type="Rhea" id="RHEA-COMP:10136"/>
        <dbReference type="Rhea" id="RHEA-COMP:20101"/>
        <dbReference type="ChEBI" id="CHEBI:15377"/>
        <dbReference type="ChEBI" id="CHEBI:43474"/>
        <dbReference type="ChEBI" id="CHEBI:46858"/>
        <dbReference type="ChEBI" id="CHEBI:61978"/>
        <dbReference type="EC" id="3.1.3.48"/>
    </reaction>
</comment>
<comment type="subcellular location">
    <subcellularLocation>
        <location evidence="1">Cytoplasm</location>
    </subcellularLocation>
</comment>
<comment type="similarity">
    <text evidence="4">Belongs to the protein-tyrosine phosphatase family.</text>
</comment>
<sequence>MTDNCREDDDNLGTSGDNALSAPTQLLVTPPAPHQTIVPPLNFCPVERYLYRSGQPSTVNFPFLLNLNLRTIIWLANEEPQDALLAFCDMHDIRLRFAAINPEGGEDDNPWDGLTEHSIVSALQTIVHRDNYPLLVCCGMGRHRTGTVIGCLRRIMGWNLASVSEEYRRFTGSRGGRILVELLIEAFDTKSVTIDKANAPEWLATAVSASEASYVPATTYSIHEM</sequence>
<gene>
    <name type="primary">OCA1</name>
    <name type="ordered locus">ADL260W</name>
</gene>
<proteinExistence type="inferred from homology"/>
<feature type="chain" id="PRO_0000333388" description="Putative tyrosine-protein phosphatase OCA1">
    <location>
        <begin position="1"/>
        <end position="225"/>
    </location>
</feature>
<feature type="domain" description="Tyrosine-protein phosphatase" evidence="2">
    <location>
        <begin position="42"/>
        <end position="196"/>
    </location>
</feature>
<feature type="region of interest" description="Disordered" evidence="3">
    <location>
        <begin position="1"/>
        <end position="24"/>
    </location>
</feature>
<feature type="compositionally biased region" description="Acidic residues" evidence="3">
    <location>
        <begin position="1"/>
        <end position="11"/>
    </location>
</feature>
<feature type="compositionally biased region" description="Polar residues" evidence="3">
    <location>
        <begin position="12"/>
        <end position="24"/>
    </location>
</feature>
<feature type="active site" description="Phosphocysteine intermediate" evidence="2">
    <location>
        <position position="138"/>
    </location>
</feature>
<accession>Q75B37</accession>
<keyword id="KW-0963">Cytoplasm</keyword>
<keyword id="KW-0378">Hydrolase</keyword>
<keyword id="KW-0904">Protein phosphatase</keyword>
<keyword id="KW-1185">Reference proteome</keyword>
<keyword id="KW-0346">Stress response</keyword>
<dbReference type="EC" id="3.1.3.48"/>
<dbReference type="EMBL" id="AE016817">
    <property type="protein sequence ID" value="AAS51660.1"/>
    <property type="molecule type" value="Genomic_DNA"/>
</dbReference>
<dbReference type="RefSeq" id="NP_983836.1">
    <property type="nucleotide sequence ID" value="NM_209189.1"/>
</dbReference>
<dbReference type="SMR" id="Q75B37"/>
<dbReference type="FunCoup" id="Q75B37">
    <property type="interactions" value="49"/>
</dbReference>
<dbReference type="STRING" id="284811.Q75B37"/>
<dbReference type="EnsemblFungi" id="AAS51660">
    <property type="protein sequence ID" value="AAS51660"/>
    <property type="gene ID" value="AGOS_ADL260W"/>
</dbReference>
<dbReference type="GeneID" id="4619971"/>
<dbReference type="KEGG" id="ago:AGOS_ADL260W"/>
<dbReference type="eggNOG" id="KOG1572">
    <property type="taxonomic scope" value="Eukaryota"/>
</dbReference>
<dbReference type="HOGENOM" id="CLU_047845_2_2_1"/>
<dbReference type="InParanoid" id="Q75B37"/>
<dbReference type="OMA" id="PWNPISE"/>
<dbReference type="OrthoDB" id="6375174at2759"/>
<dbReference type="Proteomes" id="UP000000591">
    <property type="component" value="Chromosome IV"/>
</dbReference>
<dbReference type="GO" id="GO:0005737">
    <property type="term" value="C:cytoplasm"/>
    <property type="evidence" value="ECO:0007669"/>
    <property type="project" value="UniProtKB-SubCell"/>
</dbReference>
<dbReference type="GO" id="GO:0016791">
    <property type="term" value="F:phosphatase activity"/>
    <property type="evidence" value="ECO:0000318"/>
    <property type="project" value="GO_Central"/>
</dbReference>
<dbReference type="GO" id="GO:0004725">
    <property type="term" value="F:protein tyrosine phosphatase activity"/>
    <property type="evidence" value="ECO:0007669"/>
    <property type="project" value="UniProtKB-EC"/>
</dbReference>
<dbReference type="GO" id="GO:0034599">
    <property type="term" value="P:cellular response to oxidative stress"/>
    <property type="evidence" value="ECO:0007669"/>
    <property type="project" value="EnsemblFungi"/>
</dbReference>
<dbReference type="CDD" id="cd14531">
    <property type="entry name" value="PFA-DSP_Oca1"/>
    <property type="match status" value="1"/>
</dbReference>
<dbReference type="FunFam" id="3.90.190.10:FF:000035">
    <property type="entry name" value="Tyrosine phosphatase, putative"/>
    <property type="match status" value="1"/>
</dbReference>
<dbReference type="Gene3D" id="3.90.190.10">
    <property type="entry name" value="Protein tyrosine phosphatase superfamily"/>
    <property type="match status" value="1"/>
</dbReference>
<dbReference type="InterPro" id="IPR020428">
    <property type="entry name" value="PFA-DSPs"/>
</dbReference>
<dbReference type="InterPro" id="IPR029021">
    <property type="entry name" value="Prot-tyrosine_phosphatase-like"/>
</dbReference>
<dbReference type="InterPro" id="IPR004861">
    <property type="entry name" value="Siw14-like"/>
</dbReference>
<dbReference type="InterPro" id="IPR020422">
    <property type="entry name" value="TYR_PHOSPHATASE_DUAL_dom"/>
</dbReference>
<dbReference type="PANTHER" id="PTHR31126">
    <property type="entry name" value="TYROSINE-PROTEIN PHOSPHATASE"/>
    <property type="match status" value="1"/>
</dbReference>
<dbReference type="PANTHER" id="PTHR31126:SF8">
    <property type="entry name" value="TYROSINE-PROTEIN PHOSPHATASE OCA1-RELATED"/>
    <property type="match status" value="1"/>
</dbReference>
<dbReference type="Pfam" id="PF03162">
    <property type="entry name" value="Y_phosphatase2"/>
    <property type="match status" value="1"/>
</dbReference>
<dbReference type="PRINTS" id="PR01911">
    <property type="entry name" value="PFDSPHPHTASE"/>
</dbReference>
<dbReference type="SUPFAM" id="SSF52799">
    <property type="entry name" value="(Phosphotyrosine protein) phosphatases II"/>
    <property type="match status" value="1"/>
</dbReference>
<dbReference type="PROSITE" id="PS50054">
    <property type="entry name" value="TYR_PHOSPHATASE_DUAL"/>
    <property type="match status" value="1"/>
</dbReference>
<protein>
    <recommendedName>
        <fullName>Putative tyrosine-protein phosphatase OCA1</fullName>
        <ecNumber>3.1.3.48</ecNumber>
    </recommendedName>
</protein>